<gene>
    <name evidence="1" type="primary">ruvC</name>
    <name type="ordered locus">DIP1377</name>
</gene>
<comment type="function">
    <text evidence="1">The RuvA-RuvB-RuvC complex processes Holliday junction (HJ) DNA during genetic recombination and DNA repair. Endonuclease that resolves HJ intermediates. Cleaves cruciform DNA by making single-stranded nicks across the HJ at symmetrical positions within the homologous arms, yielding a 5'-phosphate and a 3'-hydroxyl group; requires a central core of homology in the junction. The consensus cleavage sequence is 5'-(A/T)TT(C/G)-3'. Cleavage occurs on the 3'-side of the TT dinucleotide at the point of strand exchange. HJ branch migration catalyzed by RuvA-RuvB allows RuvC to scan DNA until it finds its consensus sequence, where it cleaves and resolves the cruciform DNA.</text>
</comment>
<comment type="catalytic activity">
    <reaction evidence="1">
        <text>Endonucleolytic cleavage at a junction such as a reciprocal single-stranded crossover between two homologous DNA duplexes (Holliday junction).</text>
        <dbReference type="EC" id="3.1.21.10"/>
    </reaction>
</comment>
<comment type="cofactor">
    <cofactor evidence="1">
        <name>Mg(2+)</name>
        <dbReference type="ChEBI" id="CHEBI:18420"/>
    </cofactor>
    <text evidence="1">Binds 2 Mg(2+) ion per subunit.</text>
</comment>
<comment type="subunit">
    <text evidence="1">Homodimer which binds Holliday junction (HJ) DNA. The HJ becomes 2-fold symmetrical on binding to RuvC with unstacked arms; it has a different conformation from HJ DNA in complex with RuvA. In the full resolvosome a probable DNA-RuvA(4)-RuvB(12)-RuvC(2) complex forms which resolves the HJ.</text>
</comment>
<comment type="subcellular location">
    <subcellularLocation>
        <location evidence="1">Cytoplasm</location>
    </subcellularLocation>
</comment>
<comment type="similarity">
    <text evidence="1">Belongs to the RuvC family.</text>
</comment>
<organism>
    <name type="scientific">Corynebacterium diphtheriae (strain ATCC 700971 / NCTC 13129 / Biotype gravis)</name>
    <dbReference type="NCBI Taxonomy" id="257309"/>
    <lineage>
        <taxon>Bacteria</taxon>
        <taxon>Bacillati</taxon>
        <taxon>Actinomycetota</taxon>
        <taxon>Actinomycetes</taxon>
        <taxon>Mycobacteriales</taxon>
        <taxon>Corynebacteriaceae</taxon>
        <taxon>Corynebacterium</taxon>
    </lineage>
</organism>
<accession>Q6NGX3</accession>
<keyword id="KW-0963">Cytoplasm</keyword>
<keyword id="KW-0227">DNA damage</keyword>
<keyword id="KW-0233">DNA recombination</keyword>
<keyword id="KW-0234">DNA repair</keyword>
<keyword id="KW-0238">DNA-binding</keyword>
<keyword id="KW-0255">Endonuclease</keyword>
<keyword id="KW-0378">Hydrolase</keyword>
<keyword id="KW-0460">Magnesium</keyword>
<keyword id="KW-0479">Metal-binding</keyword>
<keyword id="KW-0540">Nuclease</keyword>
<keyword id="KW-1185">Reference proteome</keyword>
<name>RUVC_CORDI</name>
<evidence type="ECO:0000255" key="1">
    <source>
        <dbReference type="HAMAP-Rule" id="MF_00034"/>
    </source>
</evidence>
<sequence>MGIDPGLTRCGLSVVQAGKGRSVIPVAVGVVRTPPHAELSQRLLELSEAVNSWIDEYQPDVVAIERIFERGNVSTVMNTAHGVGVLVLAAAQRGLPVHMYTPSEVKKAISGNGRADKKQMTAMITRILGLVEAPKPADAADALALAVCHCWRAPMLAIHNSQR</sequence>
<dbReference type="EC" id="3.1.21.10" evidence="1"/>
<dbReference type="EMBL" id="BX248358">
    <property type="protein sequence ID" value="CAE49908.1"/>
    <property type="molecule type" value="Genomic_DNA"/>
</dbReference>
<dbReference type="SMR" id="Q6NGX3"/>
<dbReference type="STRING" id="257309.DIP1377"/>
<dbReference type="KEGG" id="cdi:DIP1377"/>
<dbReference type="HOGENOM" id="CLU_091257_0_0_11"/>
<dbReference type="Proteomes" id="UP000002198">
    <property type="component" value="Chromosome"/>
</dbReference>
<dbReference type="GO" id="GO:0005737">
    <property type="term" value="C:cytoplasm"/>
    <property type="evidence" value="ECO:0007669"/>
    <property type="project" value="UniProtKB-SubCell"/>
</dbReference>
<dbReference type="GO" id="GO:0048476">
    <property type="term" value="C:Holliday junction resolvase complex"/>
    <property type="evidence" value="ECO:0007669"/>
    <property type="project" value="UniProtKB-UniRule"/>
</dbReference>
<dbReference type="GO" id="GO:0008821">
    <property type="term" value="F:crossover junction DNA endonuclease activity"/>
    <property type="evidence" value="ECO:0007669"/>
    <property type="project" value="UniProtKB-UniRule"/>
</dbReference>
<dbReference type="GO" id="GO:0003677">
    <property type="term" value="F:DNA binding"/>
    <property type="evidence" value="ECO:0007669"/>
    <property type="project" value="UniProtKB-KW"/>
</dbReference>
<dbReference type="GO" id="GO:0000287">
    <property type="term" value="F:magnesium ion binding"/>
    <property type="evidence" value="ECO:0007669"/>
    <property type="project" value="UniProtKB-UniRule"/>
</dbReference>
<dbReference type="GO" id="GO:0006310">
    <property type="term" value="P:DNA recombination"/>
    <property type="evidence" value="ECO:0007669"/>
    <property type="project" value="UniProtKB-UniRule"/>
</dbReference>
<dbReference type="GO" id="GO:0006281">
    <property type="term" value="P:DNA repair"/>
    <property type="evidence" value="ECO:0007669"/>
    <property type="project" value="UniProtKB-UniRule"/>
</dbReference>
<dbReference type="CDD" id="cd16962">
    <property type="entry name" value="RuvC"/>
    <property type="match status" value="1"/>
</dbReference>
<dbReference type="FunFam" id="3.30.420.10:FF:000002">
    <property type="entry name" value="Crossover junction endodeoxyribonuclease RuvC"/>
    <property type="match status" value="1"/>
</dbReference>
<dbReference type="Gene3D" id="3.30.420.10">
    <property type="entry name" value="Ribonuclease H-like superfamily/Ribonuclease H"/>
    <property type="match status" value="1"/>
</dbReference>
<dbReference type="HAMAP" id="MF_00034">
    <property type="entry name" value="RuvC"/>
    <property type="match status" value="1"/>
</dbReference>
<dbReference type="InterPro" id="IPR012337">
    <property type="entry name" value="RNaseH-like_sf"/>
</dbReference>
<dbReference type="InterPro" id="IPR036397">
    <property type="entry name" value="RNaseH_sf"/>
</dbReference>
<dbReference type="InterPro" id="IPR020563">
    <property type="entry name" value="X-over_junc_endoDNase_Mg_BS"/>
</dbReference>
<dbReference type="InterPro" id="IPR002176">
    <property type="entry name" value="X-over_junc_endoDNase_RuvC"/>
</dbReference>
<dbReference type="NCBIfam" id="TIGR00228">
    <property type="entry name" value="ruvC"/>
    <property type="match status" value="1"/>
</dbReference>
<dbReference type="PANTHER" id="PTHR30194">
    <property type="entry name" value="CROSSOVER JUNCTION ENDODEOXYRIBONUCLEASE RUVC"/>
    <property type="match status" value="1"/>
</dbReference>
<dbReference type="PANTHER" id="PTHR30194:SF3">
    <property type="entry name" value="CROSSOVER JUNCTION ENDODEOXYRIBONUCLEASE RUVC"/>
    <property type="match status" value="1"/>
</dbReference>
<dbReference type="Pfam" id="PF02075">
    <property type="entry name" value="RuvC"/>
    <property type="match status" value="1"/>
</dbReference>
<dbReference type="PRINTS" id="PR00696">
    <property type="entry name" value="RSOLVASERUVC"/>
</dbReference>
<dbReference type="SUPFAM" id="SSF53098">
    <property type="entry name" value="Ribonuclease H-like"/>
    <property type="match status" value="1"/>
</dbReference>
<dbReference type="PROSITE" id="PS01321">
    <property type="entry name" value="RUVC"/>
    <property type="match status" value="1"/>
</dbReference>
<feature type="chain" id="PRO_0000225134" description="Crossover junction endodeoxyribonuclease RuvC">
    <location>
        <begin position="1"/>
        <end position="163"/>
    </location>
</feature>
<feature type="active site" evidence="1">
    <location>
        <position position="4"/>
    </location>
</feature>
<feature type="active site" evidence="1">
    <location>
        <position position="65"/>
    </location>
</feature>
<feature type="active site" evidence="1">
    <location>
        <position position="138"/>
    </location>
</feature>
<feature type="binding site" evidence="1">
    <location>
        <position position="4"/>
    </location>
    <ligand>
        <name>Mg(2+)</name>
        <dbReference type="ChEBI" id="CHEBI:18420"/>
        <label>1</label>
    </ligand>
</feature>
<feature type="binding site" evidence="1">
    <location>
        <position position="65"/>
    </location>
    <ligand>
        <name>Mg(2+)</name>
        <dbReference type="ChEBI" id="CHEBI:18420"/>
        <label>2</label>
    </ligand>
</feature>
<feature type="binding site" evidence="1">
    <location>
        <position position="138"/>
    </location>
    <ligand>
        <name>Mg(2+)</name>
        <dbReference type="ChEBI" id="CHEBI:18420"/>
        <label>1</label>
    </ligand>
</feature>
<proteinExistence type="inferred from homology"/>
<reference key="1">
    <citation type="journal article" date="2003" name="Nucleic Acids Res.">
        <title>The complete genome sequence and analysis of Corynebacterium diphtheriae NCTC13129.</title>
        <authorList>
            <person name="Cerdeno-Tarraga A.-M."/>
            <person name="Efstratiou A."/>
            <person name="Dover L.G."/>
            <person name="Holden M.T.G."/>
            <person name="Pallen M.J."/>
            <person name="Bentley S.D."/>
            <person name="Besra G.S."/>
            <person name="Churcher C.M."/>
            <person name="James K.D."/>
            <person name="De Zoysa A."/>
            <person name="Chillingworth T."/>
            <person name="Cronin A."/>
            <person name="Dowd L."/>
            <person name="Feltwell T."/>
            <person name="Hamlin N."/>
            <person name="Holroyd S."/>
            <person name="Jagels K."/>
            <person name="Moule S."/>
            <person name="Quail M.A."/>
            <person name="Rabbinowitsch E."/>
            <person name="Rutherford K.M."/>
            <person name="Thomson N.R."/>
            <person name="Unwin L."/>
            <person name="Whitehead S."/>
            <person name="Barrell B.G."/>
            <person name="Parkhill J."/>
        </authorList>
    </citation>
    <scope>NUCLEOTIDE SEQUENCE [LARGE SCALE GENOMIC DNA]</scope>
    <source>
        <strain>ATCC 700971 / NCTC 13129 / Biotype gravis</strain>
    </source>
</reference>
<protein>
    <recommendedName>
        <fullName evidence="1">Crossover junction endodeoxyribonuclease RuvC</fullName>
        <ecNumber evidence="1">3.1.21.10</ecNumber>
    </recommendedName>
    <alternativeName>
        <fullName evidence="1">Holliday junction nuclease RuvC</fullName>
    </alternativeName>
    <alternativeName>
        <fullName evidence="1">Holliday junction resolvase RuvC</fullName>
    </alternativeName>
</protein>